<organism>
    <name type="scientific">Dehalococcoides mccartyi (strain ATCC BAA-2266 / KCTC 15142 / 195)</name>
    <name type="common">Dehalococcoides ethenogenes (strain 195)</name>
    <dbReference type="NCBI Taxonomy" id="243164"/>
    <lineage>
        <taxon>Bacteria</taxon>
        <taxon>Bacillati</taxon>
        <taxon>Chloroflexota</taxon>
        <taxon>Dehalococcoidia</taxon>
        <taxon>Dehalococcoidales</taxon>
        <taxon>Dehalococcoidaceae</taxon>
        <taxon>Dehalococcoides</taxon>
    </lineage>
</organism>
<name>SYM_DEHM1</name>
<proteinExistence type="inferred from homology"/>
<reference key="1">
    <citation type="journal article" date="2005" name="Science">
        <title>Genome sequence of the PCE-dechlorinating bacterium Dehalococcoides ethenogenes.</title>
        <authorList>
            <person name="Seshadri R."/>
            <person name="Adrian L."/>
            <person name="Fouts D.E."/>
            <person name="Eisen J.A."/>
            <person name="Phillippy A.M."/>
            <person name="Methe B.A."/>
            <person name="Ward N.L."/>
            <person name="Nelson W.C."/>
            <person name="DeBoy R.T."/>
            <person name="Khouri H.M."/>
            <person name="Kolonay J.F."/>
            <person name="Dodson R.J."/>
            <person name="Daugherty S.C."/>
            <person name="Brinkac L.M."/>
            <person name="Sullivan S.A."/>
            <person name="Madupu R."/>
            <person name="Nelson K.E."/>
            <person name="Kang K.H."/>
            <person name="Impraim M."/>
            <person name="Tran K."/>
            <person name="Robinson J.M."/>
            <person name="Forberger H.A."/>
            <person name="Fraser C.M."/>
            <person name="Zinder S.H."/>
            <person name="Heidelberg J.F."/>
        </authorList>
    </citation>
    <scope>NUCLEOTIDE SEQUENCE [LARGE SCALE GENOMIC DNA]</scope>
    <source>
        <strain>ATCC BAA-2266 / KCTC 15142 / 195</strain>
    </source>
</reference>
<evidence type="ECO:0000255" key="1">
    <source>
        <dbReference type="HAMAP-Rule" id="MF_00098"/>
    </source>
</evidence>
<sequence length="553" mass="63316">MSERIFIGVAWPYANSQLHLGHVAGAYLPADIFARYHRTRGDEVLMVSGSDMHGTPITIRAEQEGITAAEVAERYHRLFMASWPKLGISWDCYTSTATANHARTAQQMFLSLYEKGYIYKDTVCQPFCPHCNRFLPDRYVEGTCPHCKYEGARGDQCDNCGKPLNAAELLNFRCKNCGNPPEFRETEHFFLKLSAFEEELTHWVETKTYWRTNVLNFTLRYLKEGLKDRAITRDLDWGVPLPLPGYEGKRLYVWFEAVIGYLSASIEWAASKGQPDEWQKYWGGDTKSYYFIGKDNIPFHTIIWPAMLMGRGGLDLPYDVPSNEYLTIEAQKFSKSRNKAIWVDDVLSRYSVDTLRYLLSANMPESSDMDFSWREFVRRNNDELVATYGNLAQRVLTMVCRNFDNKVPEYGELDERSLNLIEKTSAMLFETDKALHGCNFREAIKLAMSLAQEANRYLDEKAPWKEIKVDKAAAARSLYVAMAALSGLRVAFYPFLPESSSRLSTYLGFGSEIEKDGWVLKMPVAGQEMIPPEPLFKKLEDSVVEEETARMGL</sequence>
<dbReference type="EC" id="6.1.1.10" evidence="1"/>
<dbReference type="EMBL" id="CP000027">
    <property type="protein sequence ID" value="AAW40319.1"/>
    <property type="molecule type" value="Genomic_DNA"/>
</dbReference>
<dbReference type="RefSeq" id="WP_010936166.1">
    <property type="nucleotide sequence ID" value="NC_002936.3"/>
</dbReference>
<dbReference type="SMR" id="Q3Z9G6"/>
<dbReference type="FunCoup" id="Q3Z9G6">
    <property type="interactions" value="320"/>
</dbReference>
<dbReference type="STRING" id="243164.DET0388"/>
<dbReference type="GeneID" id="3230283"/>
<dbReference type="KEGG" id="det:DET0388"/>
<dbReference type="PATRIC" id="fig|243164.10.peg.367"/>
<dbReference type="eggNOG" id="COG0143">
    <property type="taxonomic scope" value="Bacteria"/>
</dbReference>
<dbReference type="HOGENOM" id="CLU_009710_1_2_0"/>
<dbReference type="InParanoid" id="Q3Z9G6"/>
<dbReference type="Proteomes" id="UP000008289">
    <property type="component" value="Chromosome"/>
</dbReference>
<dbReference type="GO" id="GO:0005829">
    <property type="term" value="C:cytosol"/>
    <property type="evidence" value="ECO:0007669"/>
    <property type="project" value="TreeGrafter"/>
</dbReference>
<dbReference type="GO" id="GO:0005524">
    <property type="term" value="F:ATP binding"/>
    <property type="evidence" value="ECO:0007669"/>
    <property type="project" value="UniProtKB-UniRule"/>
</dbReference>
<dbReference type="GO" id="GO:0046872">
    <property type="term" value="F:metal ion binding"/>
    <property type="evidence" value="ECO:0007669"/>
    <property type="project" value="UniProtKB-KW"/>
</dbReference>
<dbReference type="GO" id="GO:0004825">
    <property type="term" value="F:methionine-tRNA ligase activity"/>
    <property type="evidence" value="ECO:0007669"/>
    <property type="project" value="UniProtKB-UniRule"/>
</dbReference>
<dbReference type="GO" id="GO:0006431">
    <property type="term" value="P:methionyl-tRNA aminoacylation"/>
    <property type="evidence" value="ECO:0007669"/>
    <property type="project" value="UniProtKB-UniRule"/>
</dbReference>
<dbReference type="CDD" id="cd07957">
    <property type="entry name" value="Anticodon_Ia_Met"/>
    <property type="match status" value="1"/>
</dbReference>
<dbReference type="CDD" id="cd00814">
    <property type="entry name" value="MetRS_core"/>
    <property type="match status" value="1"/>
</dbReference>
<dbReference type="FunFam" id="2.20.28.20:FF:000001">
    <property type="entry name" value="Methionine--tRNA ligase"/>
    <property type="match status" value="1"/>
</dbReference>
<dbReference type="Gene3D" id="3.40.50.620">
    <property type="entry name" value="HUPs"/>
    <property type="match status" value="1"/>
</dbReference>
<dbReference type="Gene3D" id="1.10.730.10">
    <property type="entry name" value="Isoleucyl-tRNA Synthetase, Domain 1"/>
    <property type="match status" value="1"/>
</dbReference>
<dbReference type="Gene3D" id="2.20.28.20">
    <property type="entry name" value="Methionyl-tRNA synthetase, Zn-domain"/>
    <property type="match status" value="1"/>
</dbReference>
<dbReference type="HAMAP" id="MF_00098">
    <property type="entry name" value="Met_tRNA_synth_type1"/>
    <property type="match status" value="1"/>
</dbReference>
<dbReference type="InterPro" id="IPR041872">
    <property type="entry name" value="Anticodon_Met"/>
</dbReference>
<dbReference type="InterPro" id="IPR023458">
    <property type="entry name" value="Met-tRNA_ligase_1"/>
</dbReference>
<dbReference type="InterPro" id="IPR014758">
    <property type="entry name" value="Met-tRNA_synth"/>
</dbReference>
<dbReference type="InterPro" id="IPR015413">
    <property type="entry name" value="Methionyl/Leucyl_tRNA_Synth"/>
</dbReference>
<dbReference type="InterPro" id="IPR033911">
    <property type="entry name" value="MetRS_core"/>
</dbReference>
<dbReference type="InterPro" id="IPR029038">
    <property type="entry name" value="MetRS_Zn"/>
</dbReference>
<dbReference type="InterPro" id="IPR014729">
    <property type="entry name" value="Rossmann-like_a/b/a_fold"/>
</dbReference>
<dbReference type="InterPro" id="IPR009080">
    <property type="entry name" value="tRNAsynth_Ia_anticodon-bd"/>
</dbReference>
<dbReference type="NCBIfam" id="TIGR00398">
    <property type="entry name" value="metG"/>
    <property type="match status" value="1"/>
</dbReference>
<dbReference type="NCBIfam" id="NF001100">
    <property type="entry name" value="PRK00133.1"/>
    <property type="match status" value="1"/>
</dbReference>
<dbReference type="PANTHER" id="PTHR45765">
    <property type="entry name" value="METHIONINE--TRNA LIGASE"/>
    <property type="match status" value="1"/>
</dbReference>
<dbReference type="PANTHER" id="PTHR45765:SF1">
    <property type="entry name" value="METHIONINE--TRNA LIGASE, CYTOPLASMIC"/>
    <property type="match status" value="1"/>
</dbReference>
<dbReference type="Pfam" id="PF19303">
    <property type="entry name" value="Anticodon_3"/>
    <property type="match status" value="1"/>
</dbReference>
<dbReference type="Pfam" id="PF09334">
    <property type="entry name" value="tRNA-synt_1g"/>
    <property type="match status" value="1"/>
</dbReference>
<dbReference type="PRINTS" id="PR01041">
    <property type="entry name" value="TRNASYNTHMET"/>
</dbReference>
<dbReference type="SUPFAM" id="SSF47323">
    <property type="entry name" value="Anticodon-binding domain of a subclass of class I aminoacyl-tRNA synthetases"/>
    <property type="match status" value="1"/>
</dbReference>
<dbReference type="SUPFAM" id="SSF57770">
    <property type="entry name" value="Methionyl-tRNA synthetase (MetRS), Zn-domain"/>
    <property type="match status" value="1"/>
</dbReference>
<dbReference type="SUPFAM" id="SSF52374">
    <property type="entry name" value="Nucleotidylyl transferase"/>
    <property type="match status" value="1"/>
</dbReference>
<protein>
    <recommendedName>
        <fullName evidence="1">Methionine--tRNA ligase</fullName>
        <ecNumber evidence="1">6.1.1.10</ecNumber>
    </recommendedName>
    <alternativeName>
        <fullName evidence="1">Methionyl-tRNA synthetase</fullName>
        <shortName evidence="1">MetRS</shortName>
    </alternativeName>
</protein>
<accession>Q3Z9G6</accession>
<keyword id="KW-0030">Aminoacyl-tRNA synthetase</keyword>
<keyword id="KW-0067">ATP-binding</keyword>
<keyword id="KW-0963">Cytoplasm</keyword>
<keyword id="KW-0436">Ligase</keyword>
<keyword id="KW-0479">Metal-binding</keyword>
<keyword id="KW-0547">Nucleotide-binding</keyword>
<keyword id="KW-0648">Protein biosynthesis</keyword>
<keyword id="KW-0862">Zinc</keyword>
<gene>
    <name evidence="1" type="primary">metG</name>
    <name type="ordered locus">DET0388</name>
</gene>
<comment type="function">
    <text evidence="1">Is required not only for elongation of protein synthesis but also for the initiation of all mRNA translation through initiator tRNA(fMet) aminoacylation.</text>
</comment>
<comment type="catalytic activity">
    <reaction evidence="1">
        <text>tRNA(Met) + L-methionine + ATP = L-methionyl-tRNA(Met) + AMP + diphosphate</text>
        <dbReference type="Rhea" id="RHEA:13481"/>
        <dbReference type="Rhea" id="RHEA-COMP:9667"/>
        <dbReference type="Rhea" id="RHEA-COMP:9698"/>
        <dbReference type="ChEBI" id="CHEBI:30616"/>
        <dbReference type="ChEBI" id="CHEBI:33019"/>
        <dbReference type="ChEBI" id="CHEBI:57844"/>
        <dbReference type="ChEBI" id="CHEBI:78442"/>
        <dbReference type="ChEBI" id="CHEBI:78530"/>
        <dbReference type="ChEBI" id="CHEBI:456215"/>
        <dbReference type="EC" id="6.1.1.10"/>
    </reaction>
</comment>
<comment type="cofactor">
    <cofactor evidence="1">
        <name>Zn(2+)</name>
        <dbReference type="ChEBI" id="CHEBI:29105"/>
    </cofactor>
    <text evidence="1">Binds 1 zinc ion per subunit.</text>
</comment>
<comment type="subunit">
    <text evidence="1">Monomer.</text>
</comment>
<comment type="subcellular location">
    <subcellularLocation>
        <location evidence="1">Cytoplasm</location>
    </subcellularLocation>
</comment>
<comment type="similarity">
    <text evidence="1">Belongs to the class-I aminoacyl-tRNA synthetase family. MetG type 1 subfamily.</text>
</comment>
<feature type="chain" id="PRO_0000331811" description="Methionine--tRNA ligase">
    <location>
        <begin position="1"/>
        <end position="553"/>
    </location>
</feature>
<feature type="short sequence motif" description="'HIGH' region">
    <location>
        <begin position="12"/>
        <end position="22"/>
    </location>
</feature>
<feature type="short sequence motif" description="'KMSKS' region">
    <location>
        <begin position="332"/>
        <end position="336"/>
    </location>
</feature>
<feature type="binding site" evidence="1">
    <location>
        <position position="144"/>
    </location>
    <ligand>
        <name>Zn(2+)</name>
        <dbReference type="ChEBI" id="CHEBI:29105"/>
    </ligand>
</feature>
<feature type="binding site" evidence="1">
    <location>
        <position position="147"/>
    </location>
    <ligand>
        <name>Zn(2+)</name>
        <dbReference type="ChEBI" id="CHEBI:29105"/>
    </ligand>
</feature>
<feature type="binding site" evidence="1">
    <location>
        <position position="157"/>
    </location>
    <ligand>
        <name>Zn(2+)</name>
        <dbReference type="ChEBI" id="CHEBI:29105"/>
    </ligand>
</feature>
<feature type="binding site" evidence="1">
    <location>
        <position position="160"/>
    </location>
    <ligand>
        <name>Zn(2+)</name>
        <dbReference type="ChEBI" id="CHEBI:29105"/>
    </ligand>
</feature>
<feature type="binding site" evidence="1">
    <location>
        <position position="335"/>
    </location>
    <ligand>
        <name>ATP</name>
        <dbReference type="ChEBI" id="CHEBI:30616"/>
    </ligand>
</feature>